<proteinExistence type="inferred from homology"/>
<feature type="chain" id="PRO_1000082009" description="Succinate--CoA ligase [ADP-forming] subunit beta">
    <location>
        <begin position="1"/>
        <end position="386"/>
    </location>
</feature>
<feature type="domain" description="ATP-grasp" evidence="1">
    <location>
        <begin position="9"/>
        <end position="244"/>
    </location>
</feature>
<feature type="binding site" evidence="1">
    <location>
        <position position="46"/>
    </location>
    <ligand>
        <name>ATP</name>
        <dbReference type="ChEBI" id="CHEBI:30616"/>
    </ligand>
</feature>
<feature type="binding site" evidence="1">
    <location>
        <begin position="53"/>
        <end position="55"/>
    </location>
    <ligand>
        <name>ATP</name>
        <dbReference type="ChEBI" id="CHEBI:30616"/>
    </ligand>
</feature>
<feature type="binding site" evidence="1">
    <location>
        <position position="99"/>
    </location>
    <ligand>
        <name>ATP</name>
        <dbReference type="ChEBI" id="CHEBI:30616"/>
    </ligand>
</feature>
<feature type="binding site" evidence="1">
    <location>
        <position position="102"/>
    </location>
    <ligand>
        <name>ATP</name>
        <dbReference type="ChEBI" id="CHEBI:30616"/>
    </ligand>
</feature>
<feature type="binding site" evidence="1">
    <location>
        <position position="107"/>
    </location>
    <ligand>
        <name>ATP</name>
        <dbReference type="ChEBI" id="CHEBI:30616"/>
    </ligand>
</feature>
<feature type="binding site" evidence="1">
    <location>
        <position position="199"/>
    </location>
    <ligand>
        <name>Mg(2+)</name>
        <dbReference type="ChEBI" id="CHEBI:18420"/>
    </ligand>
</feature>
<feature type="binding site" evidence="1">
    <location>
        <position position="213"/>
    </location>
    <ligand>
        <name>Mg(2+)</name>
        <dbReference type="ChEBI" id="CHEBI:18420"/>
    </ligand>
</feature>
<feature type="binding site" evidence="1">
    <location>
        <position position="264"/>
    </location>
    <ligand>
        <name>substrate</name>
        <note>ligand shared with subunit alpha</note>
    </ligand>
</feature>
<feature type="binding site" evidence="1">
    <location>
        <begin position="321"/>
        <end position="323"/>
    </location>
    <ligand>
        <name>substrate</name>
        <note>ligand shared with subunit alpha</note>
    </ligand>
</feature>
<sequence>MNIHEYQGKAVLRSYGVSVPNGKVAFTVEEAVEAAKELGTDVCVEKAQIHAGGRGKAGGVKVAKNLDEVRTYAESILGTTLVTHQTGPEGKEVKRLLIEEGCDIKKEYYVGLVLDRATSQVVLMASEEGGTEIEEVAEKTPEKIFKEYIDPAVGLQGFQARRIAFNINIPKELVGQAVKFMMGLYRAFIEKDCSIAEINPLVTTGEGKVMALDAKLNFDSNALYRHKDILELRDLDEEDSKEIEASKYDLNYIPLDGNIGCMVNGAGLAMATMDIIKHYHGDPANFLDVGGGATAEKVTEAFKIILSDKNVKGIFVNIFGGIMKCDVIAEGVIEATKQVGLELPLVVRLEGTNVELGKKILNESGLNIVAAESMADGAQKIVSLVG</sequence>
<comment type="function">
    <text evidence="1">Succinyl-CoA synthetase functions in the citric acid cycle (TCA), coupling the hydrolysis of succinyl-CoA to the synthesis of either ATP or GTP and thus represents the only step of substrate-level phosphorylation in the TCA. The beta subunit provides nucleotide specificity of the enzyme and binds the substrate succinate, while the binding sites for coenzyme A and phosphate are found in the alpha subunit.</text>
</comment>
<comment type="catalytic activity">
    <reaction evidence="1">
        <text>succinate + ATP + CoA = succinyl-CoA + ADP + phosphate</text>
        <dbReference type="Rhea" id="RHEA:17661"/>
        <dbReference type="ChEBI" id="CHEBI:30031"/>
        <dbReference type="ChEBI" id="CHEBI:30616"/>
        <dbReference type="ChEBI" id="CHEBI:43474"/>
        <dbReference type="ChEBI" id="CHEBI:57287"/>
        <dbReference type="ChEBI" id="CHEBI:57292"/>
        <dbReference type="ChEBI" id="CHEBI:456216"/>
        <dbReference type="EC" id="6.2.1.5"/>
    </reaction>
    <physiologicalReaction direction="right-to-left" evidence="1">
        <dbReference type="Rhea" id="RHEA:17663"/>
    </physiologicalReaction>
</comment>
<comment type="catalytic activity">
    <reaction evidence="1">
        <text>GTP + succinate + CoA = succinyl-CoA + GDP + phosphate</text>
        <dbReference type="Rhea" id="RHEA:22120"/>
        <dbReference type="ChEBI" id="CHEBI:30031"/>
        <dbReference type="ChEBI" id="CHEBI:37565"/>
        <dbReference type="ChEBI" id="CHEBI:43474"/>
        <dbReference type="ChEBI" id="CHEBI:57287"/>
        <dbReference type="ChEBI" id="CHEBI:57292"/>
        <dbReference type="ChEBI" id="CHEBI:58189"/>
    </reaction>
    <physiologicalReaction direction="right-to-left" evidence="1">
        <dbReference type="Rhea" id="RHEA:22122"/>
    </physiologicalReaction>
</comment>
<comment type="cofactor">
    <cofactor evidence="1">
        <name>Mg(2+)</name>
        <dbReference type="ChEBI" id="CHEBI:18420"/>
    </cofactor>
    <text evidence="1">Binds 1 Mg(2+) ion per subunit.</text>
</comment>
<comment type="pathway">
    <text evidence="1">Carbohydrate metabolism; tricarboxylic acid cycle; succinate from succinyl-CoA (ligase route): step 1/1.</text>
</comment>
<comment type="subunit">
    <text evidence="1">Heterotetramer of two alpha and two beta subunits.</text>
</comment>
<comment type="similarity">
    <text evidence="1">Belongs to the succinate/malate CoA ligase beta subunit family.</text>
</comment>
<accession>Q819X0</accession>
<evidence type="ECO:0000255" key="1">
    <source>
        <dbReference type="HAMAP-Rule" id="MF_00558"/>
    </source>
</evidence>
<dbReference type="EC" id="6.2.1.5" evidence="1"/>
<dbReference type="EMBL" id="AE016877">
    <property type="protein sequence ID" value="AAP10756.1"/>
    <property type="molecule type" value="Genomic_DNA"/>
</dbReference>
<dbReference type="RefSeq" id="NP_833555.1">
    <property type="nucleotide sequence ID" value="NC_004722.1"/>
</dbReference>
<dbReference type="RefSeq" id="WP_001020783.1">
    <property type="nucleotide sequence ID" value="NC_004722.1"/>
</dbReference>
<dbReference type="SMR" id="Q819X0"/>
<dbReference type="STRING" id="226900.BC_3834"/>
<dbReference type="MetOSite" id="Q819X0"/>
<dbReference type="KEGG" id="bce:BC3834"/>
<dbReference type="PATRIC" id="fig|226900.8.peg.3953"/>
<dbReference type="HOGENOM" id="CLU_037430_0_2_9"/>
<dbReference type="UniPathway" id="UPA00223">
    <property type="reaction ID" value="UER00999"/>
</dbReference>
<dbReference type="Proteomes" id="UP000001417">
    <property type="component" value="Chromosome"/>
</dbReference>
<dbReference type="GO" id="GO:0005829">
    <property type="term" value="C:cytosol"/>
    <property type="evidence" value="ECO:0000318"/>
    <property type="project" value="GO_Central"/>
</dbReference>
<dbReference type="GO" id="GO:0042709">
    <property type="term" value="C:succinate-CoA ligase complex"/>
    <property type="evidence" value="ECO:0000318"/>
    <property type="project" value="GO_Central"/>
</dbReference>
<dbReference type="GO" id="GO:0005524">
    <property type="term" value="F:ATP binding"/>
    <property type="evidence" value="ECO:0007669"/>
    <property type="project" value="UniProtKB-UniRule"/>
</dbReference>
<dbReference type="GO" id="GO:0000287">
    <property type="term" value="F:magnesium ion binding"/>
    <property type="evidence" value="ECO:0007669"/>
    <property type="project" value="UniProtKB-UniRule"/>
</dbReference>
<dbReference type="GO" id="GO:0004775">
    <property type="term" value="F:succinate-CoA ligase (ADP-forming) activity"/>
    <property type="evidence" value="ECO:0000318"/>
    <property type="project" value="GO_Central"/>
</dbReference>
<dbReference type="GO" id="GO:0004776">
    <property type="term" value="F:succinate-CoA ligase (GDP-forming) activity"/>
    <property type="evidence" value="ECO:0007669"/>
    <property type="project" value="RHEA"/>
</dbReference>
<dbReference type="GO" id="GO:0006104">
    <property type="term" value="P:succinyl-CoA metabolic process"/>
    <property type="evidence" value="ECO:0000318"/>
    <property type="project" value="GO_Central"/>
</dbReference>
<dbReference type="GO" id="GO:0006099">
    <property type="term" value="P:tricarboxylic acid cycle"/>
    <property type="evidence" value="ECO:0000318"/>
    <property type="project" value="GO_Central"/>
</dbReference>
<dbReference type="FunFam" id="3.30.1490.20:FF:000002">
    <property type="entry name" value="Succinate--CoA ligase [ADP-forming] subunit beta"/>
    <property type="match status" value="1"/>
</dbReference>
<dbReference type="FunFam" id="3.30.470.20:FF:000002">
    <property type="entry name" value="Succinate--CoA ligase [ADP-forming] subunit beta"/>
    <property type="match status" value="1"/>
</dbReference>
<dbReference type="FunFam" id="3.40.50.261:FF:000001">
    <property type="entry name" value="Succinate--CoA ligase [ADP-forming] subunit beta"/>
    <property type="match status" value="1"/>
</dbReference>
<dbReference type="Gene3D" id="3.30.1490.20">
    <property type="entry name" value="ATP-grasp fold, A domain"/>
    <property type="match status" value="1"/>
</dbReference>
<dbReference type="Gene3D" id="3.30.470.20">
    <property type="entry name" value="ATP-grasp fold, B domain"/>
    <property type="match status" value="1"/>
</dbReference>
<dbReference type="Gene3D" id="3.40.50.261">
    <property type="entry name" value="Succinyl-CoA synthetase domains"/>
    <property type="match status" value="1"/>
</dbReference>
<dbReference type="HAMAP" id="MF_00558">
    <property type="entry name" value="Succ_CoA_beta"/>
    <property type="match status" value="1"/>
</dbReference>
<dbReference type="InterPro" id="IPR011761">
    <property type="entry name" value="ATP-grasp"/>
</dbReference>
<dbReference type="InterPro" id="IPR013650">
    <property type="entry name" value="ATP-grasp_succ-CoA_synth-type"/>
</dbReference>
<dbReference type="InterPro" id="IPR013815">
    <property type="entry name" value="ATP_grasp_subdomain_1"/>
</dbReference>
<dbReference type="InterPro" id="IPR005811">
    <property type="entry name" value="SUCC_ACL_C"/>
</dbReference>
<dbReference type="InterPro" id="IPR005809">
    <property type="entry name" value="Succ_CoA_ligase-like_bsu"/>
</dbReference>
<dbReference type="InterPro" id="IPR016102">
    <property type="entry name" value="Succinyl-CoA_synth-like"/>
</dbReference>
<dbReference type="NCBIfam" id="NF001913">
    <property type="entry name" value="PRK00696.1"/>
    <property type="match status" value="1"/>
</dbReference>
<dbReference type="NCBIfam" id="TIGR01016">
    <property type="entry name" value="sucCoAbeta"/>
    <property type="match status" value="1"/>
</dbReference>
<dbReference type="PANTHER" id="PTHR11815:SF10">
    <property type="entry name" value="SUCCINATE--COA LIGASE [GDP-FORMING] SUBUNIT BETA, MITOCHONDRIAL"/>
    <property type="match status" value="1"/>
</dbReference>
<dbReference type="PANTHER" id="PTHR11815">
    <property type="entry name" value="SUCCINYL-COA SYNTHETASE BETA CHAIN"/>
    <property type="match status" value="1"/>
</dbReference>
<dbReference type="Pfam" id="PF08442">
    <property type="entry name" value="ATP-grasp_2"/>
    <property type="match status" value="1"/>
</dbReference>
<dbReference type="Pfam" id="PF00549">
    <property type="entry name" value="Ligase_CoA"/>
    <property type="match status" value="1"/>
</dbReference>
<dbReference type="PIRSF" id="PIRSF001554">
    <property type="entry name" value="SucCS_beta"/>
    <property type="match status" value="1"/>
</dbReference>
<dbReference type="SUPFAM" id="SSF56059">
    <property type="entry name" value="Glutathione synthetase ATP-binding domain-like"/>
    <property type="match status" value="1"/>
</dbReference>
<dbReference type="SUPFAM" id="SSF52210">
    <property type="entry name" value="Succinyl-CoA synthetase domains"/>
    <property type="match status" value="1"/>
</dbReference>
<dbReference type="PROSITE" id="PS50975">
    <property type="entry name" value="ATP_GRASP"/>
    <property type="match status" value="1"/>
</dbReference>
<reference key="1">
    <citation type="journal article" date="2003" name="Nature">
        <title>Genome sequence of Bacillus cereus and comparative analysis with Bacillus anthracis.</title>
        <authorList>
            <person name="Ivanova N."/>
            <person name="Sorokin A."/>
            <person name="Anderson I."/>
            <person name="Galleron N."/>
            <person name="Candelon B."/>
            <person name="Kapatral V."/>
            <person name="Bhattacharyya A."/>
            <person name="Reznik G."/>
            <person name="Mikhailova N."/>
            <person name="Lapidus A."/>
            <person name="Chu L."/>
            <person name="Mazur M."/>
            <person name="Goltsman E."/>
            <person name="Larsen N."/>
            <person name="D'Souza M."/>
            <person name="Walunas T."/>
            <person name="Grechkin Y."/>
            <person name="Pusch G."/>
            <person name="Haselkorn R."/>
            <person name="Fonstein M."/>
            <person name="Ehrlich S.D."/>
            <person name="Overbeek R."/>
            <person name="Kyrpides N.C."/>
        </authorList>
    </citation>
    <scope>NUCLEOTIDE SEQUENCE [LARGE SCALE GENOMIC DNA]</scope>
    <source>
        <strain>ATCC 14579 / DSM 31 / CCUG 7414 / JCM 2152 / NBRC 15305 / NCIMB 9373 / NCTC 2599 / NRRL B-3711</strain>
    </source>
</reference>
<protein>
    <recommendedName>
        <fullName evidence="1">Succinate--CoA ligase [ADP-forming] subunit beta</fullName>
        <ecNumber evidence="1">6.2.1.5</ecNumber>
    </recommendedName>
    <alternativeName>
        <fullName evidence="1">Succinyl-CoA synthetase subunit beta</fullName>
        <shortName evidence="1">SCS-beta</shortName>
    </alternativeName>
</protein>
<name>SUCC_BACCR</name>
<gene>
    <name evidence="1" type="primary">sucC</name>
    <name type="ordered locus">BC_3834</name>
</gene>
<organism>
    <name type="scientific">Bacillus cereus (strain ATCC 14579 / DSM 31 / CCUG 7414 / JCM 2152 / NBRC 15305 / NCIMB 9373 / NCTC 2599 / NRRL B-3711)</name>
    <dbReference type="NCBI Taxonomy" id="226900"/>
    <lineage>
        <taxon>Bacteria</taxon>
        <taxon>Bacillati</taxon>
        <taxon>Bacillota</taxon>
        <taxon>Bacilli</taxon>
        <taxon>Bacillales</taxon>
        <taxon>Bacillaceae</taxon>
        <taxon>Bacillus</taxon>
        <taxon>Bacillus cereus group</taxon>
    </lineage>
</organism>
<keyword id="KW-0067">ATP-binding</keyword>
<keyword id="KW-0436">Ligase</keyword>
<keyword id="KW-0460">Magnesium</keyword>
<keyword id="KW-0479">Metal-binding</keyword>
<keyword id="KW-0547">Nucleotide-binding</keyword>
<keyword id="KW-1185">Reference proteome</keyword>
<keyword id="KW-0816">Tricarboxylic acid cycle</keyword>